<sequence>MKALHFGAGNIGRGFIGKLLADAGIQLTFADVNQVVLDALNARHSYQVHVVGENEQVDTVSGVNAVSSIGDDVVDLIAHVDLITTAVGPVVLERIAPAIAKGLVKRKAQGVDAPLNIIACENMVRGTTQLKGHVMNALPEDAKAWVEEHVGFVDSAVDRIVPPSASATNDPLEVTVETFSEWIVDKTQFKGALPNIPGMELTDNLMAFVERKLFTLNTGHAITAYLGKLAGHQTIRDAILDESIRAVVKGAMEESGAVLIKRYGFDADKHAAYIQKILGRFENPYLKDDVERVGRQPLRKLSAGDRLIKPLLGTLEYGLPHVNLVKGIAAAMHFRSDEDPQAQELAALITEKGPQAALAQISGLDANSDVVAEAVNAYNATK</sequence>
<dbReference type="EC" id="1.1.1.17" evidence="1"/>
<dbReference type="EMBL" id="CP000026">
    <property type="protein sequence ID" value="AAV79341.1"/>
    <property type="molecule type" value="Genomic_DNA"/>
</dbReference>
<dbReference type="RefSeq" id="WP_000645397.1">
    <property type="nucleotide sequence ID" value="NC_006511.1"/>
</dbReference>
<dbReference type="SMR" id="Q5PLR3"/>
<dbReference type="KEGG" id="spt:SPA3538"/>
<dbReference type="HOGENOM" id="CLU_036089_2_0_6"/>
<dbReference type="Proteomes" id="UP000008185">
    <property type="component" value="Chromosome"/>
</dbReference>
<dbReference type="GO" id="GO:0005829">
    <property type="term" value="C:cytosol"/>
    <property type="evidence" value="ECO:0007669"/>
    <property type="project" value="TreeGrafter"/>
</dbReference>
<dbReference type="GO" id="GO:0008926">
    <property type="term" value="F:mannitol-1-phosphate 5-dehydrogenase activity"/>
    <property type="evidence" value="ECO:0007669"/>
    <property type="project" value="UniProtKB-UniRule"/>
</dbReference>
<dbReference type="GO" id="GO:0019592">
    <property type="term" value="P:mannitol catabolic process"/>
    <property type="evidence" value="ECO:0007669"/>
    <property type="project" value="TreeGrafter"/>
</dbReference>
<dbReference type="FunFam" id="1.10.1040.10:FF:000009">
    <property type="entry name" value="Mannitol-1-phosphate 5-dehydrogenase"/>
    <property type="match status" value="1"/>
</dbReference>
<dbReference type="FunFam" id="3.40.50.720:FF:000075">
    <property type="entry name" value="Mannitol-1-phosphate 5-dehydrogenase"/>
    <property type="match status" value="1"/>
</dbReference>
<dbReference type="Gene3D" id="1.10.1040.10">
    <property type="entry name" value="N-(1-d-carboxylethyl)-l-norvaline Dehydrogenase, domain 2"/>
    <property type="match status" value="1"/>
</dbReference>
<dbReference type="Gene3D" id="3.40.50.720">
    <property type="entry name" value="NAD(P)-binding Rossmann-like Domain"/>
    <property type="match status" value="1"/>
</dbReference>
<dbReference type="HAMAP" id="MF_00196">
    <property type="entry name" value="Mannitol_dehydrog"/>
    <property type="match status" value="1"/>
</dbReference>
<dbReference type="InterPro" id="IPR008927">
    <property type="entry name" value="6-PGluconate_DH-like_C_sf"/>
</dbReference>
<dbReference type="InterPro" id="IPR013328">
    <property type="entry name" value="6PGD_dom2"/>
</dbReference>
<dbReference type="InterPro" id="IPR023028">
    <property type="entry name" value="Mannitol_1_phos_5_DH"/>
</dbReference>
<dbReference type="InterPro" id="IPR000669">
    <property type="entry name" value="Mannitol_DH"/>
</dbReference>
<dbReference type="InterPro" id="IPR013118">
    <property type="entry name" value="Mannitol_DH_C"/>
</dbReference>
<dbReference type="InterPro" id="IPR023027">
    <property type="entry name" value="Mannitol_DH_CS"/>
</dbReference>
<dbReference type="InterPro" id="IPR013131">
    <property type="entry name" value="Mannitol_DH_N"/>
</dbReference>
<dbReference type="InterPro" id="IPR036291">
    <property type="entry name" value="NAD(P)-bd_dom_sf"/>
</dbReference>
<dbReference type="NCBIfam" id="NF002646">
    <property type="entry name" value="PRK02318.1-2"/>
    <property type="match status" value="1"/>
</dbReference>
<dbReference type="NCBIfam" id="NF002647">
    <property type="entry name" value="PRK02318.1-3"/>
    <property type="match status" value="1"/>
</dbReference>
<dbReference type="NCBIfam" id="NF002648">
    <property type="entry name" value="PRK02318.1-4"/>
    <property type="match status" value="1"/>
</dbReference>
<dbReference type="NCBIfam" id="NF002650">
    <property type="entry name" value="PRK02318.2-2"/>
    <property type="match status" value="1"/>
</dbReference>
<dbReference type="NCBIfam" id="NF002652">
    <property type="entry name" value="PRK02318.2-5"/>
    <property type="match status" value="1"/>
</dbReference>
<dbReference type="PANTHER" id="PTHR30524:SF0">
    <property type="entry name" value="ALTRONATE OXIDOREDUCTASE-RELATED"/>
    <property type="match status" value="1"/>
</dbReference>
<dbReference type="PANTHER" id="PTHR30524">
    <property type="entry name" value="MANNITOL-1-PHOSPHATE 5-DEHYDROGENASE"/>
    <property type="match status" value="1"/>
</dbReference>
<dbReference type="Pfam" id="PF01232">
    <property type="entry name" value="Mannitol_dh"/>
    <property type="match status" value="1"/>
</dbReference>
<dbReference type="Pfam" id="PF08125">
    <property type="entry name" value="Mannitol_dh_C"/>
    <property type="match status" value="1"/>
</dbReference>
<dbReference type="PRINTS" id="PR00084">
    <property type="entry name" value="MTLDHDRGNASE"/>
</dbReference>
<dbReference type="SUPFAM" id="SSF48179">
    <property type="entry name" value="6-phosphogluconate dehydrogenase C-terminal domain-like"/>
    <property type="match status" value="1"/>
</dbReference>
<dbReference type="SUPFAM" id="SSF51735">
    <property type="entry name" value="NAD(P)-binding Rossmann-fold domains"/>
    <property type="match status" value="1"/>
</dbReference>
<dbReference type="PROSITE" id="PS00974">
    <property type="entry name" value="MANNITOL_DHGENASE"/>
    <property type="match status" value="1"/>
</dbReference>
<keyword id="KW-0520">NAD</keyword>
<keyword id="KW-0560">Oxidoreductase</keyword>
<protein>
    <recommendedName>
        <fullName evidence="1">Mannitol-1-phosphate 5-dehydrogenase</fullName>
        <ecNumber evidence="1">1.1.1.17</ecNumber>
    </recommendedName>
</protein>
<name>MTLD_SALPA</name>
<organism>
    <name type="scientific">Salmonella paratyphi A (strain ATCC 9150 / SARB42)</name>
    <dbReference type="NCBI Taxonomy" id="295319"/>
    <lineage>
        <taxon>Bacteria</taxon>
        <taxon>Pseudomonadati</taxon>
        <taxon>Pseudomonadota</taxon>
        <taxon>Gammaproteobacteria</taxon>
        <taxon>Enterobacterales</taxon>
        <taxon>Enterobacteriaceae</taxon>
        <taxon>Salmonella</taxon>
    </lineage>
</organism>
<proteinExistence type="inferred from homology"/>
<comment type="catalytic activity">
    <reaction evidence="1">
        <text>D-mannitol 1-phosphate + NAD(+) = beta-D-fructose 6-phosphate + NADH + H(+)</text>
        <dbReference type="Rhea" id="RHEA:19661"/>
        <dbReference type="ChEBI" id="CHEBI:15378"/>
        <dbReference type="ChEBI" id="CHEBI:57540"/>
        <dbReference type="ChEBI" id="CHEBI:57634"/>
        <dbReference type="ChEBI" id="CHEBI:57945"/>
        <dbReference type="ChEBI" id="CHEBI:61381"/>
        <dbReference type="EC" id="1.1.1.17"/>
    </reaction>
</comment>
<comment type="similarity">
    <text evidence="1">Belongs to the mannitol dehydrogenase family.</text>
</comment>
<accession>Q5PLR3</accession>
<gene>
    <name evidence="1" type="primary">mtlD</name>
    <name type="ordered locus">SPA3538</name>
</gene>
<feature type="chain" id="PRO_1000011808" description="Mannitol-1-phosphate 5-dehydrogenase">
    <location>
        <begin position="1"/>
        <end position="382"/>
    </location>
</feature>
<feature type="binding site" evidence="1">
    <location>
        <begin position="3"/>
        <end position="14"/>
    </location>
    <ligand>
        <name>NAD(+)</name>
        <dbReference type="ChEBI" id="CHEBI:57540"/>
    </ligand>
</feature>
<evidence type="ECO:0000255" key="1">
    <source>
        <dbReference type="HAMAP-Rule" id="MF_00196"/>
    </source>
</evidence>
<reference key="1">
    <citation type="journal article" date="2004" name="Nat. Genet.">
        <title>Comparison of genome degradation in Paratyphi A and Typhi, human-restricted serovars of Salmonella enterica that cause typhoid.</title>
        <authorList>
            <person name="McClelland M."/>
            <person name="Sanderson K.E."/>
            <person name="Clifton S.W."/>
            <person name="Latreille P."/>
            <person name="Porwollik S."/>
            <person name="Sabo A."/>
            <person name="Meyer R."/>
            <person name="Bieri T."/>
            <person name="Ozersky P."/>
            <person name="McLellan M."/>
            <person name="Harkins C.R."/>
            <person name="Wang C."/>
            <person name="Nguyen C."/>
            <person name="Berghoff A."/>
            <person name="Elliott G."/>
            <person name="Kohlberg S."/>
            <person name="Strong C."/>
            <person name="Du F."/>
            <person name="Carter J."/>
            <person name="Kremizki C."/>
            <person name="Layman D."/>
            <person name="Leonard S."/>
            <person name="Sun H."/>
            <person name="Fulton L."/>
            <person name="Nash W."/>
            <person name="Miner T."/>
            <person name="Minx P."/>
            <person name="Delehaunty K."/>
            <person name="Fronick C."/>
            <person name="Magrini V."/>
            <person name="Nhan M."/>
            <person name="Warren W."/>
            <person name="Florea L."/>
            <person name="Spieth J."/>
            <person name="Wilson R.K."/>
        </authorList>
    </citation>
    <scope>NUCLEOTIDE SEQUENCE [LARGE SCALE GENOMIC DNA]</scope>
    <source>
        <strain>ATCC 9150 / SARB42</strain>
    </source>
</reference>